<feature type="chain" id="PRO_1000081524" description="Chaperone protein HtpG">
    <location>
        <begin position="1"/>
        <end position="624"/>
    </location>
</feature>
<feature type="region of interest" description="A; substrate-binding" evidence="1">
    <location>
        <begin position="1"/>
        <end position="336"/>
    </location>
</feature>
<feature type="region of interest" description="B" evidence="1">
    <location>
        <begin position="337"/>
        <end position="552"/>
    </location>
</feature>
<feature type="region of interest" description="C" evidence="1">
    <location>
        <begin position="553"/>
        <end position="624"/>
    </location>
</feature>
<gene>
    <name evidence="1" type="primary">htpG</name>
    <name type="ordered locus">SPAB_03085</name>
</gene>
<sequence length="624" mass="71501">MKGQETRGFQSEVKQLLHLMIHSLYSNKEIFLRELISNASDAADKLRFRALSNPDLYEGDGELRVRVSFDKDKRTLTIADNGVGMNRDEVIDHLGTIAKSGTKSFLESMGSDQAKDSQLIGQFGVGFYSAFIVADKVTVRTRAAGDKPENGVFWESAGEGEYTVADITKNDRGTEITLHLREGEDEFLDDWRVRSIISKYSDHIALPVEIEKREEKDGETVISWEKINKAQALWTRNKSEIKDDEYNEFYKHIAHDFTDPLTWSHNRVEGKQEYTSLLYIPSQAPWDLWNRDHKHGLKLYVQRVFIMDDAEQFMPNYLRFVRGLIDSNDLPLNVSREILQDSTVTRNLRSALTKRVLQMLEKLAKDDAEKYQTFWKQFGLVLKEGPAEDHANQEAIAKLLRFASTHTDSSAQTVSLEDYVSRMKEGQEKIYYITADSYAAAKNSPHLELLRKKGIEVLLLSDRIDEWMMNYLTEFDGKAFQSVAKADESIEKLADEVDENAKEAEKALEPFVERVKTLLGDRVKEVRLTHRLTDTPAIVTTDADEMSTQMAKLFAAAGQSVPEVKYIFELNPDHVLVKRTADTEDEAQFKEWVELLLDQALFAERGTLEDPNQFIRRMNQLLVS</sequence>
<organism>
    <name type="scientific">Salmonella paratyphi B (strain ATCC BAA-1250 / SPB7)</name>
    <dbReference type="NCBI Taxonomy" id="1016998"/>
    <lineage>
        <taxon>Bacteria</taxon>
        <taxon>Pseudomonadati</taxon>
        <taxon>Pseudomonadota</taxon>
        <taxon>Gammaproteobacteria</taxon>
        <taxon>Enterobacterales</taxon>
        <taxon>Enterobacteriaceae</taxon>
        <taxon>Salmonella</taxon>
    </lineage>
</organism>
<proteinExistence type="inferred from homology"/>
<dbReference type="EMBL" id="CP000886">
    <property type="protein sequence ID" value="ABX68447.1"/>
    <property type="molecule type" value="Genomic_DNA"/>
</dbReference>
<dbReference type="RefSeq" id="WP_001523272.1">
    <property type="nucleotide sequence ID" value="NC_010102.1"/>
</dbReference>
<dbReference type="SMR" id="A9MW88"/>
<dbReference type="KEGG" id="spq:SPAB_03085"/>
<dbReference type="PATRIC" id="fig|1016998.12.peg.2911"/>
<dbReference type="HOGENOM" id="CLU_006684_3_0_6"/>
<dbReference type="Proteomes" id="UP000008556">
    <property type="component" value="Chromosome"/>
</dbReference>
<dbReference type="GO" id="GO:0005737">
    <property type="term" value="C:cytoplasm"/>
    <property type="evidence" value="ECO:0007669"/>
    <property type="project" value="UniProtKB-SubCell"/>
</dbReference>
<dbReference type="GO" id="GO:0005524">
    <property type="term" value="F:ATP binding"/>
    <property type="evidence" value="ECO:0007669"/>
    <property type="project" value="UniProtKB-UniRule"/>
</dbReference>
<dbReference type="GO" id="GO:0016887">
    <property type="term" value="F:ATP hydrolysis activity"/>
    <property type="evidence" value="ECO:0007669"/>
    <property type="project" value="InterPro"/>
</dbReference>
<dbReference type="GO" id="GO:0140662">
    <property type="term" value="F:ATP-dependent protein folding chaperone"/>
    <property type="evidence" value="ECO:0007669"/>
    <property type="project" value="InterPro"/>
</dbReference>
<dbReference type="GO" id="GO:0051082">
    <property type="term" value="F:unfolded protein binding"/>
    <property type="evidence" value="ECO:0007669"/>
    <property type="project" value="UniProtKB-UniRule"/>
</dbReference>
<dbReference type="CDD" id="cd16927">
    <property type="entry name" value="HATPase_Hsp90-like"/>
    <property type="match status" value="1"/>
</dbReference>
<dbReference type="FunFam" id="1.20.120.790:FF:000002">
    <property type="entry name" value="Molecular chaperone HtpG"/>
    <property type="match status" value="1"/>
</dbReference>
<dbReference type="FunFam" id="3.30.230.80:FF:000002">
    <property type="entry name" value="Molecular chaperone HtpG"/>
    <property type="match status" value="1"/>
</dbReference>
<dbReference type="FunFam" id="3.30.565.10:FF:000009">
    <property type="entry name" value="Molecular chaperone HtpG"/>
    <property type="match status" value="1"/>
</dbReference>
<dbReference type="FunFam" id="3.40.50.11260:FF:000002">
    <property type="entry name" value="Molecular chaperone HtpG"/>
    <property type="match status" value="1"/>
</dbReference>
<dbReference type="Gene3D" id="3.30.230.80">
    <property type="match status" value="1"/>
</dbReference>
<dbReference type="Gene3D" id="3.40.50.11260">
    <property type="match status" value="1"/>
</dbReference>
<dbReference type="Gene3D" id="1.20.120.790">
    <property type="entry name" value="Heat shock protein 90, C-terminal domain"/>
    <property type="match status" value="1"/>
</dbReference>
<dbReference type="Gene3D" id="3.30.565.10">
    <property type="entry name" value="Histidine kinase-like ATPase, C-terminal domain"/>
    <property type="match status" value="1"/>
</dbReference>
<dbReference type="HAMAP" id="MF_00505">
    <property type="entry name" value="HSP90"/>
    <property type="match status" value="1"/>
</dbReference>
<dbReference type="InterPro" id="IPR036890">
    <property type="entry name" value="HATPase_C_sf"/>
</dbReference>
<dbReference type="InterPro" id="IPR019805">
    <property type="entry name" value="Heat_shock_protein_90_CS"/>
</dbReference>
<dbReference type="InterPro" id="IPR037196">
    <property type="entry name" value="HSP90_C"/>
</dbReference>
<dbReference type="InterPro" id="IPR001404">
    <property type="entry name" value="Hsp90_fam"/>
</dbReference>
<dbReference type="InterPro" id="IPR020575">
    <property type="entry name" value="Hsp90_N"/>
</dbReference>
<dbReference type="InterPro" id="IPR020568">
    <property type="entry name" value="Ribosomal_Su5_D2-typ_SF"/>
</dbReference>
<dbReference type="NCBIfam" id="NF003555">
    <property type="entry name" value="PRK05218.1"/>
    <property type="match status" value="1"/>
</dbReference>
<dbReference type="PANTHER" id="PTHR11528">
    <property type="entry name" value="HEAT SHOCK PROTEIN 90 FAMILY MEMBER"/>
    <property type="match status" value="1"/>
</dbReference>
<dbReference type="Pfam" id="PF13589">
    <property type="entry name" value="HATPase_c_3"/>
    <property type="match status" value="1"/>
</dbReference>
<dbReference type="Pfam" id="PF00183">
    <property type="entry name" value="HSP90"/>
    <property type="match status" value="1"/>
</dbReference>
<dbReference type="PIRSF" id="PIRSF002583">
    <property type="entry name" value="Hsp90"/>
    <property type="match status" value="1"/>
</dbReference>
<dbReference type="PRINTS" id="PR00775">
    <property type="entry name" value="HEATSHOCK90"/>
</dbReference>
<dbReference type="SMART" id="SM00387">
    <property type="entry name" value="HATPase_c"/>
    <property type="match status" value="1"/>
</dbReference>
<dbReference type="SUPFAM" id="SSF55874">
    <property type="entry name" value="ATPase domain of HSP90 chaperone/DNA topoisomerase II/histidine kinase"/>
    <property type="match status" value="1"/>
</dbReference>
<dbReference type="SUPFAM" id="SSF110942">
    <property type="entry name" value="HSP90 C-terminal domain"/>
    <property type="match status" value="1"/>
</dbReference>
<dbReference type="SUPFAM" id="SSF54211">
    <property type="entry name" value="Ribosomal protein S5 domain 2-like"/>
    <property type="match status" value="1"/>
</dbReference>
<dbReference type="PROSITE" id="PS00298">
    <property type="entry name" value="HSP90"/>
    <property type="match status" value="1"/>
</dbReference>
<keyword id="KW-0067">ATP-binding</keyword>
<keyword id="KW-0143">Chaperone</keyword>
<keyword id="KW-0963">Cytoplasm</keyword>
<keyword id="KW-0547">Nucleotide-binding</keyword>
<keyword id="KW-0346">Stress response</keyword>
<evidence type="ECO:0000255" key="1">
    <source>
        <dbReference type="HAMAP-Rule" id="MF_00505"/>
    </source>
</evidence>
<reference key="1">
    <citation type="submission" date="2007-11" db="EMBL/GenBank/DDBJ databases">
        <authorList>
            <consortium name="The Salmonella enterica serovar Paratyphi B Genome Sequencing Project"/>
            <person name="McClelland M."/>
            <person name="Sanderson E.K."/>
            <person name="Porwollik S."/>
            <person name="Spieth J."/>
            <person name="Clifton W.S."/>
            <person name="Fulton R."/>
            <person name="Cordes M."/>
            <person name="Wollam A."/>
            <person name="Shah N."/>
            <person name="Pepin K."/>
            <person name="Bhonagiri V."/>
            <person name="Nash W."/>
            <person name="Johnson M."/>
            <person name="Thiruvilangam P."/>
            <person name="Wilson R."/>
        </authorList>
    </citation>
    <scope>NUCLEOTIDE SEQUENCE [LARGE SCALE GENOMIC DNA]</scope>
    <source>
        <strain>ATCC BAA-1250 / SPB7</strain>
    </source>
</reference>
<protein>
    <recommendedName>
        <fullName evidence="1">Chaperone protein HtpG</fullName>
    </recommendedName>
    <alternativeName>
        <fullName evidence="1">Heat shock protein HtpG</fullName>
    </alternativeName>
    <alternativeName>
        <fullName evidence="1">High temperature protein G</fullName>
    </alternativeName>
</protein>
<comment type="function">
    <text evidence="1">Molecular chaperone. Has ATPase activity.</text>
</comment>
<comment type="subunit">
    <text evidence="1">Homodimer.</text>
</comment>
<comment type="subcellular location">
    <subcellularLocation>
        <location evidence="1">Cytoplasm</location>
    </subcellularLocation>
</comment>
<comment type="similarity">
    <text evidence="1">Belongs to the heat shock protein 90 family.</text>
</comment>
<name>HTPG_SALPB</name>
<accession>A9MW88</accession>